<evidence type="ECO:0000250" key="1">
    <source>
        <dbReference type="UniProtKB" id="Q9YZN9"/>
    </source>
</evidence>
<evidence type="ECO:0000256" key="2">
    <source>
        <dbReference type="SAM" id="MobiDB-lite"/>
    </source>
</evidence>
<evidence type="ECO:0000305" key="3"/>
<organismHost>
    <name type="scientific">Homo sapiens</name>
    <name type="common">Human</name>
    <dbReference type="NCBI Taxonomy" id="9606"/>
</organismHost>
<protein>
    <recommendedName>
        <fullName>Protein C</fullName>
    </recommendedName>
</protein>
<dbReference type="EMBL" id="X16566">
    <property type="protein sequence ID" value="CAA34565.1"/>
    <property type="molecule type" value="Genomic_RNA"/>
</dbReference>
<dbReference type="GO" id="GO:0044161">
    <property type="term" value="C:host cell cytoplasmic vesicle"/>
    <property type="evidence" value="ECO:0007669"/>
    <property type="project" value="UniProtKB-SubCell"/>
</dbReference>
<dbReference type="GO" id="GO:0042025">
    <property type="term" value="C:host cell nucleus"/>
    <property type="evidence" value="ECO:0007669"/>
    <property type="project" value="UniProtKB-SubCell"/>
</dbReference>
<dbReference type="InterPro" id="IPR003875">
    <property type="entry name" value="Paramyxovir_NSC"/>
</dbReference>
<dbReference type="Pfam" id="PF02725">
    <property type="entry name" value="Paramyxo_NS_C"/>
    <property type="match status" value="1"/>
</dbReference>
<sequence>MSKTDWNASGPSRPSPSAHWPSGKLWQHGQKYQTTQDRSRPPARRRRQALRVSANHASQQLDQLKAVHLASAVRDLERAMTTLKPWDSPQEISRHQALGYSVIMFMITAVKRLRESKMLTLSWFNQALMVTAPSQEETMNLKTAMWILANLIPRDMLSLTGDLLPSLWGSGLLMLKLQKEERSTSS</sequence>
<gene>
    <name type="primary">P/V/C</name>
</gene>
<comment type="function">
    <text evidence="1">Ribonucleocapsid-associated protein that interacts with the phosphoprotein (P), thereby increasing replication accuracy and processivity of the polymerase complex.</text>
</comment>
<comment type="subunit">
    <text evidence="1">Interacts with the phosphoprotein (via C-terminus); this interaction allows C to associate with the ribonucleocapsid.</text>
</comment>
<comment type="subcellular location">
    <subcellularLocation>
        <location evidence="1">Host nucleus</location>
    </subcellularLocation>
    <subcellularLocation>
        <location evidence="1">Host cytoplasmic vesicle</location>
    </subcellularLocation>
    <text evidence="1">Relocalizes from the nucleus to the inclusion bodies in the presence of P.</text>
</comment>
<comment type="similarity">
    <text evidence="3">Belongs to the morbillivirus protein C family.</text>
</comment>
<feature type="chain" id="PRO_0000142795" description="Protein C">
    <location>
        <begin position="1"/>
        <end position="186"/>
    </location>
</feature>
<feature type="region of interest" description="Disordered" evidence="2">
    <location>
        <begin position="1"/>
        <end position="43"/>
    </location>
</feature>
<feature type="compositionally biased region" description="Polar residues" evidence="2">
    <location>
        <begin position="1"/>
        <end position="12"/>
    </location>
</feature>
<name>C_MEASI</name>
<keyword id="KW-1036">Host cytoplasmic vesicle</keyword>
<keyword id="KW-1048">Host nucleus</keyword>
<proteinExistence type="inferred from homology"/>
<reference key="1">
    <citation type="journal article" date="1992" name="Virology">
        <title>Subacute sclerosing panencephalitis is typically characterized by alterations in the fusion protein cytoplasmic domain of the persisting measles virus.</title>
        <authorList>
            <person name="Schmid A."/>
            <person name="Spielhofer P."/>
            <person name="Cattaneo R."/>
            <person name="Baczko K."/>
            <person name="Ter Meulen V."/>
            <person name="Billeter M.A."/>
        </authorList>
    </citation>
    <scope>NUCLEOTIDE SEQUENCE [GENOMIC RNA]</scope>
</reference>
<organism>
    <name type="scientific">Measles virus (strain IP-3-Ca)</name>
    <name type="common">MeV</name>
    <name type="synonym">Subacute sclerose panencephalitis virus</name>
    <dbReference type="NCBI Taxonomy" id="11237"/>
    <lineage>
        <taxon>Viruses</taxon>
        <taxon>Riboviria</taxon>
        <taxon>Orthornavirae</taxon>
        <taxon>Negarnaviricota</taxon>
        <taxon>Haploviricotina</taxon>
        <taxon>Monjiviricetes</taxon>
        <taxon>Mononegavirales</taxon>
        <taxon>Paramyxoviridae</taxon>
        <taxon>Orthoparamyxovirinae</taxon>
        <taxon>Morbillivirus</taxon>
        <taxon>Morbillivirus hominis</taxon>
        <taxon>Measles morbillivirus</taxon>
    </lineage>
</organism>
<accession>P26035</accession>